<dbReference type="EC" id="7.1.1.-" evidence="1"/>
<dbReference type="EMBL" id="CP000655">
    <property type="protein sequence ID" value="ABP34265.1"/>
    <property type="molecule type" value="Genomic_DNA"/>
</dbReference>
<dbReference type="RefSeq" id="WP_011902890.1">
    <property type="nucleotide sequence ID" value="NC_009379.1"/>
</dbReference>
<dbReference type="SMR" id="A4SXQ1"/>
<dbReference type="GeneID" id="31481423"/>
<dbReference type="KEGG" id="pnu:Pnuc_1049"/>
<dbReference type="eggNOG" id="COG0852">
    <property type="taxonomic scope" value="Bacteria"/>
</dbReference>
<dbReference type="HOGENOM" id="CLU_042628_2_1_4"/>
<dbReference type="Proteomes" id="UP000000231">
    <property type="component" value="Chromosome"/>
</dbReference>
<dbReference type="GO" id="GO:0005886">
    <property type="term" value="C:plasma membrane"/>
    <property type="evidence" value="ECO:0007669"/>
    <property type="project" value="UniProtKB-SubCell"/>
</dbReference>
<dbReference type="GO" id="GO:0008137">
    <property type="term" value="F:NADH dehydrogenase (ubiquinone) activity"/>
    <property type="evidence" value="ECO:0007669"/>
    <property type="project" value="InterPro"/>
</dbReference>
<dbReference type="GO" id="GO:0050136">
    <property type="term" value="F:NADH:ubiquinone reductase (non-electrogenic) activity"/>
    <property type="evidence" value="ECO:0007669"/>
    <property type="project" value="UniProtKB-UniRule"/>
</dbReference>
<dbReference type="GO" id="GO:0048038">
    <property type="term" value="F:quinone binding"/>
    <property type="evidence" value="ECO:0007669"/>
    <property type="project" value="UniProtKB-KW"/>
</dbReference>
<dbReference type="Gene3D" id="3.30.460.80">
    <property type="entry name" value="NADH:ubiquinone oxidoreductase, 30kDa subunit"/>
    <property type="match status" value="1"/>
</dbReference>
<dbReference type="HAMAP" id="MF_01357">
    <property type="entry name" value="NDH1_NuoC"/>
    <property type="match status" value="1"/>
</dbReference>
<dbReference type="InterPro" id="IPR010218">
    <property type="entry name" value="NADH_DH_suC"/>
</dbReference>
<dbReference type="InterPro" id="IPR037232">
    <property type="entry name" value="NADH_quin_OxRdtase_su_C/D-like"/>
</dbReference>
<dbReference type="InterPro" id="IPR001268">
    <property type="entry name" value="NADH_UbQ_OxRdtase_30kDa_su"/>
</dbReference>
<dbReference type="InterPro" id="IPR020396">
    <property type="entry name" value="NADH_UbQ_OxRdtase_CS"/>
</dbReference>
<dbReference type="NCBIfam" id="TIGR01961">
    <property type="entry name" value="NuoC_fam"/>
    <property type="match status" value="1"/>
</dbReference>
<dbReference type="NCBIfam" id="NF004730">
    <property type="entry name" value="PRK06074.1-1"/>
    <property type="match status" value="1"/>
</dbReference>
<dbReference type="PANTHER" id="PTHR10884:SF14">
    <property type="entry name" value="NADH DEHYDROGENASE [UBIQUINONE] IRON-SULFUR PROTEIN 3, MITOCHONDRIAL"/>
    <property type="match status" value="1"/>
</dbReference>
<dbReference type="PANTHER" id="PTHR10884">
    <property type="entry name" value="NADH DEHYDROGENASE UBIQUINONE IRON-SULFUR PROTEIN 3"/>
    <property type="match status" value="1"/>
</dbReference>
<dbReference type="Pfam" id="PF00329">
    <property type="entry name" value="Complex1_30kDa"/>
    <property type="match status" value="1"/>
</dbReference>
<dbReference type="SUPFAM" id="SSF143243">
    <property type="entry name" value="Nqo5-like"/>
    <property type="match status" value="1"/>
</dbReference>
<dbReference type="PROSITE" id="PS00542">
    <property type="entry name" value="COMPLEX1_30K"/>
    <property type="match status" value="1"/>
</dbReference>
<keyword id="KW-1003">Cell membrane</keyword>
<keyword id="KW-0472">Membrane</keyword>
<keyword id="KW-0520">NAD</keyword>
<keyword id="KW-0874">Quinone</keyword>
<keyword id="KW-1185">Reference proteome</keyword>
<keyword id="KW-1278">Translocase</keyword>
<keyword id="KW-0813">Transport</keyword>
<keyword id="KW-0830">Ubiquinone</keyword>
<proteinExistence type="inferred from homology"/>
<evidence type="ECO:0000255" key="1">
    <source>
        <dbReference type="HAMAP-Rule" id="MF_01357"/>
    </source>
</evidence>
<gene>
    <name evidence="1" type="primary">nuoC</name>
    <name type="ordered locus">Pnuc_1049</name>
</gene>
<organism>
    <name type="scientific">Polynucleobacter asymbioticus (strain DSM 18221 / CIP 109841 / QLW-P1DMWA-1)</name>
    <name type="common">Polynucleobacter necessarius subsp. asymbioticus</name>
    <dbReference type="NCBI Taxonomy" id="312153"/>
    <lineage>
        <taxon>Bacteria</taxon>
        <taxon>Pseudomonadati</taxon>
        <taxon>Pseudomonadota</taxon>
        <taxon>Betaproteobacteria</taxon>
        <taxon>Burkholderiales</taxon>
        <taxon>Burkholderiaceae</taxon>
        <taxon>Polynucleobacter</taxon>
    </lineage>
</organism>
<reference key="1">
    <citation type="journal article" date="2012" name="Stand. Genomic Sci.">
        <title>Complete genome sequence of Polynucleobacter necessarius subsp. asymbioticus type strain (QLW-P1DMWA-1(T)).</title>
        <authorList>
            <person name="Meincke L."/>
            <person name="Copeland A."/>
            <person name="Lapidus A."/>
            <person name="Lucas S."/>
            <person name="Berry K.W."/>
            <person name="Del Rio T.G."/>
            <person name="Hammon N."/>
            <person name="Dalin E."/>
            <person name="Tice H."/>
            <person name="Pitluck S."/>
            <person name="Richardson P."/>
            <person name="Bruce D."/>
            <person name="Goodwin L."/>
            <person name="Han C."/>
            <person name="Tapia R."/>
            <person name="Detter J.C."/>
            <person name="Schmutz J."/>
            <person name="Brettin T."/>
            <person name="Larimer F."/>
            <person name="Land M."/>
            <person name="Hauser L."/>
            <person name="Kyrpides N.C."/>
            <person name="Ivanova N."/>
            <person name="Goker M."/>
            <person name="Woyke T."/>
            <person name="Wu Q.L."/>
            <person name="Pockl M."/>
            <person name="Hahn M.W."/>
            <person name="Klenk H.P."/>
        </authorList>
    </citation>
    <scope>NUCLEOTIDE SEQUENCE [LARGE SCALE GENOMIC DNA]</scope>
    <source>
        <strain>DSM 18221 / CIP 109841 / QLW-P1DMWA-1</strain>
    </source>
</reference>
<sequence>MSDRLVHLAANLEKVLGKRVQSIEIALGEVTVVVNADTYFESAMLMRDDPSLAFEQLIDLCGVDYQDFRDGAWNGQRFGVVSHLLSLEHNWRLRVRVFAPDDSYPLVASITPVWSSANWFEREAFDLYGIIFEGHEDLRRILTDYGFIGHPFRKDFPISGNVEMRYDPELKRVVYQPVTIEAREITPRIVREEQYGDPV</sequence>
<accession>A4SXQ1</accession>
<comment type="function">
    <text evidence="1">NDH-1 shuttles electrons from NADH, via FMN and iron-sulfur (Fe-S) centers, to quinones in the respiratory chain. The immediate electron acceptor for the enzyme in this species is believed to be ubiquinone. Couples the redox reaction to proton translocation (for every two electrons transferred, four hydrogen ions are translocated across the cytoplasmic membrane), and thus conserves the redox energy in a proton gradient.</text>
</comment>
<comment type="catalytic activity">
    <reaction evidence="1">
        <text>a quinone + NADH + 5 H(+)(in) = a quinol + NAD(+) + 4 H(+)(out)</text>
        <dbReference type="Rhea" id="RHEA:57888"/>
        <dbReference type="ChEBI" id="CHEBI:15378"/>
        <dbReference type="ChEBI" id="CHEBI:24646"/>
        <dbReference type="ChEBI" id="CHEBI:57540"/>
        <dbReference type="ChEBI" id="CHEBI:57945"/>
        <dbReference type="ChEBI" id="CHEBI:132124"/>
    </reaction>
</comment>
<comment type="subunit">
    <text evidence="1">NDH-1 is composed of 14 different subunits. Subunits NuoB, C, D, E, F, and G constitute the peripheral sector of the complex.</text>
</comment>
<comment type="subcellular location">
    <subcellularLocation>
        <location evidence="1">Cell membrane</location>
        <topology evidence="1">Peripheral membrane protein</topology>
        <orientation evidence="1">Cytoplasmic side</orientation>
    </subcellularLocation>
</comment>
<comment type="similarity">
    <text evidence="1">Belongs to the complex I 30 kDa subunit family.</text>
</comment>
<feature type="chain" id="PRO_0000358163" description="NADH-quinone oxidoreductase subunit C">
    <location>
        <begin position="1"/>
        <end position="199"/>
    </location>
</feature>
<name>NUOC_POLAQ</name>
<protein>
    <recommendedName>
        <fullName evidence="1">NADH-quinone oxidoreductase subunit C</fullName>
        <ecNumber evidence="1">7.1.1.-</ecNumber>
    </recommendedName>
    <alternativeName>
        <fullName evidence="1">NADH dehydrogenase I subunit C</fullName>
    </alternativeName>
    <alternativeName>
        <fullName evidence="1">NDH-1 subunit C</fullName>
    </alternativeName>
</protein>